<accession>P05508</accession>
<accession>Q9T528</accession>
<comment type="function">
    <text evidence="1">Core subunit of the mitochondrial membrane respiratory chain NADH dehydrogenase (Complex I) which catalyzes electron transfer from NADH through the respiratory chain, using ubiquinone as an electron acceptor. Essential for the catalytic activity and assembly of complex I.</text>
</comment>
<comment type="catalytic activity">
    <reaction evidence="1">
        <text>a ubiquinone + NADH + 5 H(+)(in) = a ubiquinol + NAD(+) + 4 H(+)(out)</text>
        <dbReference type="Rhea" id="RHEA:29091"/>
        <dbReference type="Rhea" id="RHEA-COMP:9565"/>
        <dbReference type="Rhea" id="RHEA-COMP:9566"/>
        <dbReference type="ChEBI" id="CHEBI:15378"/>
        <dbReference type="ChEBI" id="CHEBI:16389"/>
        <dbReference type="ChEBI" id="CHEBI:17976"/>
        <dbReference type="ChEBI" id="CHEBI:57540"/>
        <dbReference type="ChEBI" id="CHEBI:57945"/>
        <dbReference type="EC" id="7.1.1.2"/>
    </reaction>
</comment>
<comment type="subunit">
    <text evidence="2">Core subunit of respiratory chain NADH dehydrogenase (Complex I) which is composed of 45 different subunits.</text>
</comment>
<comment type="subcellular location">
    <subcellularLocation>
        <location evidence="2">Mitochondrion inner membrane</location>
        <topology evidence="3">Multi-pass membrane protein</topology>
    </subcellularLocation>
</comment>
<comment type="similarity">
    <text evidence="4">Belongs to the complex I subunit 4 family.</text>
</comment>
<name>NU4M_RAT</name>
<gene>
    <name evidence="5" type="primary">Mt-nd4</name>
    <name type="synonym">Mtnd4</name>
    <name type="synonym">Nd4</name>
</gene>
<geneLocation type="mitochondrion"/>
<feature type="chain" id="PRO_0000117981" description="NADH-ubiquinone oxidoreductase chain 4">
    <location>
        <begin position="1"/>
        <end position="459"/>
    </location>
</feature>
<feature type="transmembrane region" description="Helical" evidence="3">
    <location>
        <begin position="23"/>
        <end position="43"/>
    </location>
</feature>
<feature type="transmembrane region" description="Helical" evidence="3">
    <location>
        <begin position="60"/>
        <end position="80"/>
    </location>
</feature>
<feature type="transmembrane region" description="Helical" evidence="3">
    <location>
        <begin position="92"/>
        <end position="112"/>
    </location>
</feature>
<feature type="transmembrane region" description="Helical" evidence="3">
    <location>
        <begin position="113"/>
        <end position="133"/>
    </location>
</feature>
<feature type="transmembrane region" description="Helical" evidence="3">
    <location>
        <begin position="147"/>
        <end position="167"/>
    </location>
</feature>
<feature type="transmembrane region" description="Helical" evidence="3">
    <location>
        <begin position="194"/>
        <end position="214"/>
    </location>
</feature>
<feature type="transmembrane region" description="Helical" evidence="3">
    <location>
        <begin position="224"/>
        <end position="244"/>
    </location>
</feature>
<feature type="transmembrane region" description="Helical" evidence="3">
    <location>
        <begin position="257"/>
        <end position="277"/>
    </location>
</feature>
<feature type="transmembrane region" description="Helical" evidence="3">
    <location>
        <begin position="284"/>
        <end position="303"/>
    </location>
</feature>
<feature type="transmembrane region" description="Helical" evidence="3">
    <location>
        <begin position="308"/>
        <end position="330"/>
    </location>
</feature>
<feature type="transmembrane region" description="Helical" evidence="3">
    <location>
        <begin position="350"/>
        <end position="370"/>
    </location>
</feature>
<feature type="transmembrane region" description="Helical" evidence="3">
    <location>
        <begin position="393"/>
        <end position="413"/>
    </location>
</feature>
<feature type="transmembrane region" description="Helical" evidence="3">
    <location>
        <begin position="434"/>
        <end position="454"/>
    </location>
</feature>
<feature type="sequence conflict" description="In Ref. 1; CAA32963." evidence="4" ref="1">
    <original>I</original>
    <variation>M</variation>
    <location>
        <position position="405"/>
    </location>
</feature>
<reference key="1">
    <citation type="journal article" date="1989" name="J. Mol. Evol.">
        <title>The complete nucleotide sequence of the Rattus norvegicus mitochondrial genome: cryptic signals revealed by comparative analysis between vertebrates.</title>
        <authorList>
            <person name="Gadaleta G."/>
            <person name="Pepe G."/>
            <person name="de Candia G."/>
            <person name="Quagliariello C."/>
            <person name="Sbisa E."/>
            <person name="Saccone C."/>
        </authorList>
    </citation>
    <scope>NUCLEOTIDE SEQUENCE [GENOMIC DNA]</scope>
    <source>
        <strain>Wistar</strain>
    </source>
</reference>
<reference key="2">
    <citation type="journal article" date="2004" name="Nature">
        <title>Genome sequence of the Brown Norway rat yields insights into mammalian evolution.</title>
        <authorList>
            <person name="Gibbs R.A."/>
            <person name="Weinstock G.M."/>
            <person name="Metzker M.L."/>
            <person name="Muzny D.M."/>
            <person name="Sodergren E.J."/>
            <person name="Scherer S."/>
            <person name="Scott G."/>
            <person name="Steffen D."/>
            <person name="Worley K.C."/>
            <person name="Burch P.E."/>
            <person name="Okwuonu G."/>
            <person name="Hines S."/>
            <person name="Lewis L."/>
            <person name="Deramo C."/>
            <person name="Delgado O."/>
            <person name="Dugan-Rocha S."/>
            <person name="Miner G."/>
            <person name="Morgan M."/>
            <person name="Hawes A."/>
            <person name="Gill R."/>
            <person name="Holt R.A."/>
            <person name="Adams M.D."/>
            <person name="Amanatides P.G."/>
            <person name="Baden-Tillson H."/>
            <person name="Barnstead M."/>
            <person name="Chin S."/>
            <person name="Evans C.A."/>
            <person name="Ferriera S."/>
            <person name="Fosler C."/>
            <person name="Glodek A."/>
            <person name="Gu Z."/>
            <person name="Jennings D."/>
            <person name="Kraft C.L."/>
            <person name="Nguyen T."/>
            <person name="Pfannkoch C.M."/>
            <person name="Sitter C."/>
            <person name="Sutton G.G."/>
            <person name="Venter J.C."/>
            <person name="Woodage T."/>
            <person name="Smith D."/>
            <person name="Lee H.-M."/>
            <person name="Gustafson E."/>
            <person name="Cahill P."/>
            <person name="Kana A."/>
            <person name="Doucette-Stamm L."/>
            <person name="Weinstock K."/>
            <person name="Fechtel K."/>
            <person name="Weiss R.B."/>
            <person name="Dunn D.M."/>
            <person name="Green E.D."/>
            <person name="Blakesley R.W."/>
            <person name="Bouffard G.G."/>
            <person name="De Jong P.J."/>
            <person name="Osoegawa K."/>
            <person name="Zhu B."/>
            <person name="Marra M."/>
            <person name="Schein J."/>
            <person name="Bosdet I."/>
            <person name="Fjell C."/>
            <person name="Jones S."/>
            <person name="Krzywinski M."/>
            <person name="Mathewson C."/>
            <person name="Siddiqui A."/>
            <person name="Wye N."/>
            <person name="McPherson J."/>
            <person name="Zhao S."/>
            <person name="Fraser C.M."/>
            <person name="Shetty J."/>
            <person name="Shatsman S."/>
            <person name="Geer K."/>
            <person name="Chen Y."/>
            <person name="Abramzon S."/>
            <person name="Nierman W.C."/>
            <person name="Havlak P.H."/>
            <person name="Chen R."/>
            <person name="Durbin K.J."/>
            <person name="Egan A."/>
            <person name="Ren Y."/>
            <person name="Song X.-Z."/>
            <person name="Li B."/>
            <person name="Liu Y."/>
            <person name="Qin X."/>
            <person name="Cawley S."/>
            <person name="Cooney A.J."/>
            <person name="D'Souza L.M."/>
            <person name="Martin K."/>
            <person name="Wu J.Q."/>
            <person name="Gonzalez-Garay M.L."/>
            <person name="Jackson A.R."/>
            <person name="Kalafus K.J."/>
            <person name="McLeod M.P."/>
            <person name="Milosavljevic A."/>
            <person name="Virk D."/>
            <person name="Volkov A."/>
            <person name="Wheeler D.A."/>
            <person name="Zhang Z."/>
            <person name="Bailey J.A."/>
            <person name="Eichler E.E."/>
            <person name="Tuzun E."/>
            <person name="Birney E."/>
            <person name="Mongin E."/>
            <person name="Ureta-Vidal A."/>
            <person name="Woodwark C."/>
            <person name="Zdobnov E."/>
            <person name="Bork P."/>
            <person name="Suyama M."/>
            <person name="Torrents D."/>
            <person name="Alexandersson M."/>
            <person name="Trask B.J."/>
            <person name="Young J.M."/>
            <person name="Huang H."/>
            <person name="Wang H."/>
            <person name="Xing H."/>
            <person name="Daniels S."/>
            <person name="Gietzen D."/>
            <person name="Schmidt J."/>
            <person name="Stevens K."/>
            <person name="Vitt U."/>
            <person name="Wingrove J."/>
            <person name="Camara F."/>
            <person name="Mar Alba M."/>
            <person name="Abril J.F."/>
            <person name="Guigo R."/>
            <person name="Smit A."/>
            <person name="Dubchak I."/>
            <person name="Rubin E.M."/>
            <person name="Couronne O."/>
            <person name="Poliakov A."/>
            <person name="Huebner N."/>
            <person name="Ganten D."/>
            <person name="Goesele C."/>
            <person name="Hummel O."/>
            <person name="Kreitler T."/>
            <person name="Lee Y.-A."/>
            <person name="Monti J."/>
            <person name="Schulz H."/>
            <person name="Zimdahl H."/>
            <person name="Himmelbauer H."/>
            <person name="Lehrach H."/>
            <person name="Jacob H.J."/>
            <person name="Bromberg S."/>
            <person name="Gullings-Handley J."/>
            <person name="Jensen-Seaman M.I."/>
            <person name="Kwitek A.E."/>
            <person name="Lazar J."/>
            <person name="Pasko D."/>
            <person name="Tonellato P.J."/>
            <person name="Twigger S."/>
            <person name="Ponting C.P."/>
            <person name="Duarte J.M."/>
            <person name="Rice S."/>
            <person name="Goodstadt L."/>
            <person name="Beatson S.A."/>
            <person name="Emes R.D."/>
            <person name="Winter E.E."/>
            <person name="Webber C."/>
            <person name="Brandt P."/>
            <person name="Nyakatura G."/>
            <person name="Adetobi M."/>
            <person name="Chiaromonte F."/>
            <person name="Elnitski L."/>
            <person name="Eswara P."/>
            <person name="Hardison R.C."/>
            <person name="Hou M."/>
            <person name="Kolbe D."/>
            <person name="Makova K."/>
            <person name="Miller W."/>
            <person name="Nekrutenko A."/>
            <person name="Riemer C."/>
            <person name="Schwartz S."/>
            <person name="Taylor J."/>
            <person name="Yang S."/>
            <person name="Zhang Y."/>
            <person name="Lindpaintner K."/>
            <person name="Andrews T.D."/>
            <person name="Caccamo M."/>
            <person name="Clamp M."/>
            <person name="Clarke L."/>
            <person name="Curwen V."/>
            <person name="Durbin R.M."/>
            <person name="Eyras E."/>
            <person name="Searle S.M."/>
            <person name="Cooper G.M."/>
            <person name="Batzoglou S."/>
            <person name="Brudno M."/>
            <person name="Sidow A."/>
            <person name="Stone E.A."/>
            <person name="Payseur B.A."/>
            <person name="Bourque G."/>
            <person name="Lopez-Otin C."/>
            <person name="Puente X.S."/>
            <person name="Chakrabarti K."/>
            <person name="Chatterji S."/>
            <person name="Dewey C."/>
            <person name="Pachter L."/>
            <person name="Bray N."/>
            <person name="Yap V.B."/>
            <person name="Caspi A."/>
            <person name="Tesler G."/>
            <person name="Pevzner P.A."/>
            <person name="Haussler D."/>
            <person name="Roskin K.M."/>
            <person name="Baertsch R."/>
            <person name="Clawson H."/>
            <person name="Furey T.S."/>
            <person name="Hinrichs A.S."/>
            <person name="Karolchik D."/>
            <person name="Kent W.J."/>
            <person name="Rosenbloom K.R."/>
            <person name="Trumbower H."/>
            <person name="Weirauch M."/>
            <person name="Cooper D.N."/>
            <person name="Stenson P.D."/>
            <person name="Ma B."/>
            <person name="Brent M."/>
            <person name="Arumugam M."/>
            <person name="Shteynberg D."/>
            <person name="Copley R.R."/>
            <person name="Taylor M.S."/>
            <person name="Riethman H."/>
            <person name="Mudunuri U."/>
            <person name="Peterson J."/>
            <person name="Guyer M."/>
            <person name="Felsenfeld A."/>
            <person name="Old S."/>
            <person name="Mockrin S."/>
            <person name="Collins F.S."/>
        </authorList>
    </citation>
    <scope>NUCLEOTIDE SEQUENCE [LARGE SCALE GENOMIC DNA]</scope>
    <source>
        <strain>Brown Norway</strain>
    </source>
</reference>
<reference key="3">
    <citation type="journal article" date="1981" name="Ann. N. Y. Acad. Sci.">
        <title>Mitochondrial DNA polymorphism: evolutionary studies of the genus Rattus.</title>
        <authorList>
            <person name="Brown G.G."/>
            <person name="Castora F.J."/>
            <person name="Frantz S.C."/>
            <person name="Simpson M.V."/>
        </authorList>
    </citation>
    <scope>NUCLEOTIDE SEQUENCE [GENOMIC DNA] OF 308-363</scope>
</reference>
<reference key="4">
    <citation type="journal article" date="1981" name="Chromosoma">
        <title>Nucleotide sequence variants of Rattus norvegicus mitochondrial DNA.</title>
        <authorList>
            <person name="Goddard J.M."/>
            <person name="Masters J.N."/>
            <person name="Jones S.S."/>
            <person name="Ashworth W.D. Jr."/>
            <person name="Wolstenholme D.R."/>
        </authorList>
    </citation>
    <scope>NUCLEOTIDE SEQUENCE [GENOMIC DNA] OF 308-363</scope>
    <source>
        <strain>Sasco-1</strain>
        <strain>Sasco-2</strain>
        <strain>Wild-UT</strain>
    </source>
</reference>
<evidence type="ECO:0000250" key="1">
    <source>
        <dbReference type="UniProtKB" id="P03905"/>
    </source>
</evidence>
<evidence type="ECO:0000250" key="2">
    <source>
        <dbReference type="UniProtKB" id="P03910"/>
    </source>
</evidence>
<evidence type="ECO:0000255" key="3"/>
<evidence type="ECO:0000305" key="4"/>
<evidence type="ECO:0000312" key="5">
    <source>
        <dbReference type="RGD" id="620559"/>
    </source>
</evidence>
<dbReference type="EC" id="7.1.1.2" evidence="1"/>
<dbReference type="EMBL" id="X14848">
    <property type="protein sequence ID" value="CAA32963.1"/>
    <property type="molecule type" value="Genomic_DNA"/>
</dbReference>
<dbReference type="EMBL" id="AY172581">
    <property type="protein sequence ID" value="AAN77603.1"/>
    <property type="molecule type" value="Genomic_DNA"/>
</dbReference>
<dbReference type="EMBL" id="M35251">
    <property type="protein sequence ID" value="AAA69850.1"/>
    <property type="molecule type" value="Genomic_DNA"/>
</dbReference>
<dbReference type="EMBL" id="M13694">
    <property type="protein sequence ID" value="AAA69847.1"/>
    <property type="molecule type" value="Genomic_DNA"/>
</dbReference>
<dbReference type="EMBL" id="M13695">
    <property type="protein sequence ID" value="AAA69849.1"/>
    <property type="molecule type" value="Genomic_DNA"/>
</dbReference>
<dbReference type="EMBL" id="M13696">
    <property type="protein sequence ID" value="AAA69848.1"/>
    <property type="molecule type" value="Genomic_DNA"/>
</dbReference>
<dbReference type="PIR" id="S04756">
    <property type="entry name" value="S04756"/>
</dbReference>
<dbReference type="RefSeq" id="AP_004901.1">
    <property type="nucleotide sequence ID" value="AC_000022.2"/>
</dbReference>
<dbReference type="RefSeq" id="YP_665638.1">
    <property type="nucleotide sequence ID" value="NC_001665.2"/>
</dbReference>
<dbReference type="SMR" id="P05508"/>
<dbReference type="FunCoup" id="P05508">
    <property type="interactions" value="41"/>
</dbReference>
<dbReference type="STRING" id="10116.ENSRNOP00000043141"/>
<dbReference type="GlyGen" id="P05508">
    <property type="glycosylation" value="1 site, 1 O-linked glycan (1 site)"/>
</dbReference>
<dbReference type="iPTMnet" id="P05508"/>
<dbReference type="PhosphoSitePlus" id="P05508"/>
<dbReference type="SwissPalm" id="P05508"/>
<dbReference type="PaxDb" id="10116-ENSRNOP00000043141"/>
<dbReference type="Ensembl" id="ENSRNOT00000042928.3">
    <property type="protein sequence ID" value="ENSRNOP00000043141.3"/>
    <property type="gene ID" value="ENSRNOG00000029707.3"/>
</dbReference>
<dbReference type="GeneID" id="26201"/>
<dbReference type="KEGG" id="rno:26201"/>
<dbReference type="AGR" id="RGD:620559"/>
<dbReference type="CTD" id="4538"/>
<dbReference type="RGD" id="620559">
    <property type="gene designation" value="Mt-nd4"/>
</dbReference>
<dbReference type="eggNOG" id="KOG4845">
    <property type="taxonomic scope" value="Eukaryota"/>
</dbReference>
<dbReference type="GeneTree" id="ENSGT00730000111316"/>
<dbReference type="HOGENOM" id="CLU_007100_4_0_1"/>
<dbReference type="InParanoid" id="P05508"/>
<dbReference type="OMA" id="ITRWGNQ"/>
<dbReference type="OrthoDB" id="9443350at2759"/>
<dbReference type="Reactome" id="R-RNO-611105">
    <property type="pathway name" value="Respiratory electron transport"/>
</dbReference>
<dbReference type="Reactome" id="R-RNO-6799198">
    <property type="pathway name" value="Complex I biogenesis"/>
</dbReference>
<dbReference type="PRO" id="PR:P05508"/>
<dbReference type="Proteomes" id="UP000002494">
    <property type="component" value="Mitochondrion"/>
</dbReference>
<dbReference type="Bgee" id="ENSRNOG00000029707">
    <property type="expression patterns" value="Expressed in ovary and 18 other cell types or tissues"/>
</dbReference>
<dbReference type="ExpressionAtlas" id="P05508">
    <property type="expression patterns" value="baseline and differential"/>
</dbReference>
<dbReference type="GO" id="GO:0005743">
    <property type="term" value="C:mitochondrial inner membrane"/>
    <property type="evidence" value="ECO:0000250"/>
    <property type="project" value="UniProtKB"/>
</dbReference>
<dbReference type="GO" id="GO:0045271">
    <property type="term" value="C:respiratory chain complex I"/>
    <property type="evidence" value="ECO:0000266"/>
    <property type="project" value="RGD"/>
</dbReference>
<dbReference type="GO" id="GO:0008137">
    <property type="term" value="F:NADH dehydrogenase (ubiquinone) activity"/>
    <property type="evidence" value="ECO:0000250"/>
    <property type="project" value="UniProtKB"/>
</dbReference>
<dbReference type="GO" id="GO:0048039">
    <property type="term" value="F:ubiquinone binding"/>
    <property type="evidence" value="ECO:0000318"/>
    <property type="project" value="GO_Central"/>
</dbReference>
<dbReference type="GO" id="GO:0009060">
    <property type="term" value="P:aerobic respiration"/>
    <property type="evidence" value="ECO:0000318"/>
    <property type="project" value="GO_Central"/>
</dbReference>
<dbReference type="GO" id="GO:0021549">
    <property type="term" value="P:cerebellum development"/>
    <property type="evidence" value="ECO:0000270"/>
    <property type="project" value="RGD"/>
</dbReference>
<dbReference type="GO" id="GO:0015990">
    <property type="term" value="P:electron transport coupled proton transport"/>
    <property type="evidence" value="ECO:0000318"/>
    <property type="project" value="GO_Central"/>
</dbReference>
<dbReference type="GO" id="GO:0001701">
    <property type="term" value="P:in utero embryonic development"/>
    <property type="evidence" value="ECO:0000270"/>
    <property type="project" value="RGD"/>
</dbReference>
<dbReference type="GO" id="GO:0006120">
    <property type="term" value="P:mitochondrial electron transport, NADH to ubiquinone"/>
    <property type="evidence" value="ECO:0000250"/>
    <property type="project" value="UniProtKB"/>
</dbReference>
<dbReference type="GO" id="GO:0032981">
    <property type="term" value="P:mitochondrial respiratory chain complex I assembly"/>
    <property type="evidence" value="ECO:0000250"/>
    <property type="project" value="UniProtKB"/>
</dbReference>
<dbReference type="GO" id="GO:0045471">
    <property type="term" value="P:response to ethanol"/>
    <property type="evidence" value="ECO:0000270"/>
    <property type="project" value="RGD"/>
</dbReference>
<dbReference type="GO" id="GO:0001666">
    <property type="term" value="P:response to hypoxia"/>
    <property type="evidence" value="ECO:0000270"/>
    <property type="project" value="RGD"/>
</dbReference>
<dbReference type="GO" id="GO:0035094">
    <property type="term" value="P:response to nicotine"/>
    <property type="evidence" value="ECO:0000270"/>
    <property type="project" value="RGD"/>
</dbReference>
<dbReference type="InterPro" id="IPR000260">
    <property type="entry name" value="NADH4_N"/>
</dbReference>
<dbReference type="InterPro" id="IPR010227">
    <property type="entry name" value="NADH_Q_OxRdtase_chainM/4"/>
</dbReference>
<dbReference type="InterPro" id="IPR003918">
    <property type="entry name" value="NADH_UbQ_OxRdtase"/>
</dbReference>
<dbReference type="InterPro" id="IPR001750">
    <property type="entry name" value="ND/Mrp_TM"/>
</dbReference>
<dbReference type="NCBIfam" id="TIGR01972">
    <property type="entry name" value="NDH_I_M"/>
    <property type="match status" value="1"/>
</dbReference>
<dbReference type="PANTHER" id="PTHR43507">
    <property type="entry name" value="NADH-UBIQUINONE OXIDOREDUCTASE CHAIN 4"/>
    <property type="match status" value="1"/>
</dbReference>
<dbReference type="PANTHER" id="PTHR43507:SF20">
    <property type="entry name" value="NADH-UBIQUINONE OXIDOREDUCTASE CHAIN 4"/>
    <property type="match status" value="1"/>
</dbReference>
<dbReference type="Pfam" id="PF01059">
    <property type="entry name" value="Oxidored_q5_N"/>
    <property type="match status" value="1"/>
</dbReference>
<dbReference type="Pfam" id="PF00361">
    <property type="entry name" value="Proton_antipo_M"/>
    <property type="match status" value="1"/>
</dbReference>
<dbReference type="PRINTS" id="PR01437">
    <property type="entry name" value="NUOXDRDTASE4"/>
</dbReference>
<sequence>MLKIIFPSIMLLPLTWLSANKKIWTNVTSYSFLVSLLSLSLLWQNDENYLNFSVMFSSDPLSTPLIILTTWLLPLMMLASQNHMKKENMMHQKLYISMLISLQILLIMTFSATELILFYILFEATLIPTLIIITRWGNQTERLNAGIYFLFYTLIGSIPLLIALISIQNSMGTLNFLILSLTTHPLPSTWSNTILWLACMMAFMIKMPLYGVHLWLPKAHVEAPIAGSMILAAILLKLGGYGMMRVSIILDPLTKSLAYPFIILSLWGMIMTSSICLRQTDLKSLIAYSSVSHMALVITAIMIQTPWSFMGATMLMIAHGLTSSLLFCLANTNYERIHSRTMIMARGLQMIFPLMATWWLLASLANLALPPLINLMGELFIVMATFSWSNPSIILMATNIVITGIYSMYMIITTQRGKLTSHMNNLQPSHTRELTLMALHIIPLMLLTINPKLITGLTM</sequence>
<proteinExistence type="inferred from homology"/>
<organism>
    <name type="scientific">Rattus norvegicus</name>
    <name type="common">Rat</name>
    <dbReference type="NCBI Taxonomy" id="10116"/>
    <lineage>
        <taxon>Eukaryota</taxon>
        <taxon>Metazoa</taxon>
        <taxon>Chordata</taxon>
        <taxon>Craniata</taxon>
        <taxon>Vertebrata</taxon>
        <taxon>Euteleostomi</taxon>
        <taxon>Mammalia</taxon>
        <taxon>Eutheria</taxon>
        <taxon>Euarchontoglires</taxon>
        <taxon>Glires</taxon>
        <taxon>Rodentia</taxon>
        <taxon>Myomorpha</taxon>
        <taxon>Muroidea</taxon>
        <taxon>Muridae</taxon>
        <taxon>Murinae</taxon>
        <taxon>Rattus</taxon>
    </lineage>
</organism>
<protein>
    <recommendedName>
        <fullName>NADH-ubiquinone oxidoreductase chain 4</fullName>
        <ecNumber evidence="1">7.1.1.2</ecNumber>
    </recommendedName>
    <alternativeName>
        <fullName>NADH dehydrogenase subunit 4</fullName>
    </alternativeName>
</protein>
<keyword id="KW-0249">Electron transport</keyword>
<keyword id="KW-0472">Membrane</keyword>
<keyword id="KW-0496">Mitochondrion</keyword>
<keyword id="KW-0999">Mitochondrion inner membrane</keyword>
<keyword id="KW-0520">NAD</keyword>
<keyword id="KW-1185">Reference proteome</keyword>
<keyword id="KW-0679">Respiratory chain</keyword>
<keyword id="KW-1278">Translocase</keyword>
<keyword id="KW-0812">Transmembrane</keyword>
<keyword id="KW-1133">Transmembrane helix</keyword>
<keyword id="KW-0813">Transport</keyword>
<keyword id="KW-0830">Ubiquinone</keyword>